<dbReference type="EC" id="2.1.1.-" evidence="1"/>
<dbReference type="EMBL" id="CP001252">
    <property type="protein sequence ID" value="ACK48361.1"/>
    <property type="molecule type" value="Genomic_DNA"/>
</dbReference>
<dbReference type="RefSeq" id="WP_006083369.1">
    <property type="nucleotide sequence ID" value="NC_011663.1"/>
</dbReference>
<dbReference type="SMR" id="B8E680"/>
<dbReference type="KEGG" id="sbp:Sbal223_3886"/>
<dbReference type="HOGENOM" id="CLU_049382_4_1_6"/>
<dbReference type="Proteomes" id="UP000002507">
    <property type="component" value="Chromosome"/>
</dbReference>
<dbReference type="GO" id="GO:0005829">
    <property type="term" value="C:cytosol"/>
    <property type="evidence" value="ECO:0007669"/>
    <property type="project" value="TreeGrafter"/>
</dbReference>
<dbReference type="GO" id="GO:0016279">
    <property type="term" value="F:protein-lysine N-methyltransferase activity"/>
    <property type="evidence" value="ECO:0007669"/>
    <property type="project" value="TreeGrafter"/>
</dbReference>
<dbReference type="GO" id="GO:0032259">
    <property type="term" value="P:methylation"/>
    <property type="evidence" value="ECO:0007669"/>
    <property type="project" value="UniProtKB-KW"/>
</dbReference>
<dbReference type="CDD" id="cd02440">
    <property type="entry name" value="AdoMet_MTases"/>
    <property type="match status" value="1"/>
</dbReference>
<dbReference type="Gene3D" id="3.40.50.150">
    <property type="entry name" value="Vaccinia Virus protein VP39"/>
    <property type="match status" value="1"/>
</dbReference>
<dbReference type="HAMAP" id="MF_00735">
    <property type="entry name" value="Methyltr_PrmA"/>
    <property type="match status" value="1"/>
</dbReference>
<dbReference type="InterPro" id="IPR050078">
    <property type="entry name" value="Ribosomal_L11_MeTrfase_PrmA"/>
</dbReference>
<dbReference type="InterPro" id="IPR004498">
    <property type="entry name" value="Ribosomal_PrmA_MeTrfase"/>
</dbReference>
<dbReference type="InterPro" id="IPR029063">
    <property type="entry name" value="SAM-dependent_MTases_sf"/>
</dbReference>
<dbReference type="NCBIfam" id="TIGR00406">
    <property type="entry name" value="prmA"/>
    <property type="match status" value="1"/>
</dbReference>
<dbReference type="PANTHER" id="PTHR43648">
    <property type="entry name" value="ELECTRON TRANSFER FLAVOPROTEIN BETA SUBUNIT LYSINE METHYLTRANSFERASE"/>
    <property type="match status" value="1"/>
</dbReference>
<dbReference type="PANTHER" id="PTHR43648:SF1">
    <property type="entry name" value="ELECTRON TRANSFER FLAVOPROTEIN BETA SUBUNIT LYSINE METHYLTRANSFERASE"/>
    <property type="match status" value="1"/>
</dbReference>
<dbReference type="Pfam" id="PF06325">
    <property type="entry name" value="PrmA"/>
    <property type="match status" value="1"/>
</dbReference>
<dbReference type="PIRSF" id="PIRSF000401">
    <property type="entry name" value="RPL11_MTase"/>
    <property type="match status" value="1"/>
</dbReference>
<dbReference type="SUPFAM" id="SSF53335">
    <property type="entry name" value="S-adenosyl-L-methionine-dependent methyltransferases"/>
    <property type="match status" value="1"/>
</dbReference>
<sequence length="293" mass="32496">MPWIQLRINTNSDDAETISDLLMEEGSVSITFEDGKDTPIFEPKLGETPLWRDTVVVALFDAETDLTPTIAMLKTLPFLGENFSHKVEQIEDKDWVREWMDNFHPIQFGTRLWICPSWREIPDPTAVNVILDPGLAFGTGTHPTTALCLEWLDSLDLSDEEVIDFGCGSGILAVAALKLGAKNVTGIDIDYQAIDASRANAERNDVADKLALYLPEDQPADLKADVLVANILAGPLRELAPLIAERVKTGGKLALSGLLKEQAQEISDFYSQWFDMDAAAHKEDWSRLTGKRK</sequence>
<name>PRMA_SHEB2</name>
<reference key="1">
    <citation type="submission" date="2008-12" db="EMBL/GenBank/DDBJ databases">
        <title>Complete sequence of chromosome of Shewanella baltica OS223.</title>
        <authorList>
            <consortium name="US DOE Joint Genome Institute"/>
            <person name="Lucas S."/>
            <person name="Copeland A."/>
            <person name="Lapidus A."/>
            <person name="Glavina del Rio T."/>
            <person name="Dalin E."/>
            <person name="Tice H."/>
            <person name="Bruce D."/>
            <person name="Goodwin L."/>
            <person name="Pitluck S."/>
            <person name="Chertkov O."/>
            <person name="Meincke L."/>
            <person name="Brettin T."/>
            <person name="Detter J.C."/>
            <person name="Han C."/>
            <person name="Kuske C.R."/>
            <person name="Larimer F."/>
            <person name="Land M."/>
            <person name="Hauser L."/>
            <person name="Kyrpides N."/>
            <person name="Ovchinnikova G."/>
            <person name="Brettar I."/>
            <person name="Rodrigues J."/>
            <person name="Konstantinidis K."/>
            <person name="Tiedje J."/>
        </authorList>
    </citation>
    <scope>NUCLEOTIDE SEQUENCE [LARGE SCALE GENOMIC DNA]</scope>
    <source>
        <strain>OS223</strain>
    </source>
</reference>
<organism>
    <name type="scientific">Shewanella baltica (strain OS223)</name>
    <dbReference type="NCBI Taxonomy" id="407976"/>
    <lineage>
        <taxon>Bacteria</taxon>
        <taxon>Pseudomonadati</taxon>
        <taxon>Pseudomonadota</taxon>
        <taxon>Gammaproteobacteria</taxon>
        <taxon>Alteromonadales</taxon>
        <taxon>Shewanellaceae</taxon>
        <taxon>Shewanella</taxon>
    </lineage>
</organism>
<keyword id="KW-0963">Cytoplasm</keyword>
<keyword id="KW-0489">Methyltransferase</keyword>
<keyword id="KW-0949">S-adenosyl-L-methionine</keyword>
<keyword id="KW-0808">Transferase</keyword>
<protein>
    <recommendedName>
        <fullName evidence="1">Ribosomal protein L11 methyltransferase</fullName>
        <shortName evidence="1">L11 Mtase</shortName>
        <ecNumber evidence="1">2.1.1.-</ecNumber>
    </recommendedName>
</protein>
<comment type="function">
    <text evidence="1">Methylates ribosomal protein L11.</text>
</comment>
<comment type="catalytic activity">
    <reaction evidence="1">
        <text>L-lysyl-[protein] + 3 S-adenosyl-L-methionine = N(6),N(6),N(6)-trimethyl-L-lysyl-[protein] + 3 S-adenosyl-L-homocysteine + 3 H(+)</text>
        <dbReference type="Rhea" id="RHEA:54192"/>
        <dbReference type="Rhea" id="RHEA-COMP:9752"/>
        <dbReference type="Rhea" id="RHEA-COMP:13826"/>
        <dbReference type="ChEBI" id="CHEBI:15378"/>
        <dbReference type="ChEBI" id="CHEBI:29969"/>
        <dbReference type="ChEBI" id="CHEBI:57856"/>
        <dbReference type="ChEBI" id="CHEBI:59789"/>
        <dbReference type="ChEBI" id="CHEBI:61961"/>
    </reaction>
</comment>
<comment type="subcellular location">
    <subcellularLocation>
        <location evidence="1">Cytoplasm</location>
    </subcellularLocation>
</comment>
<comment type="similarity">
    <text evidence="1">Belongs to the methyltransferase superfamily. PrmA family.</text>
</comment>
<evidence type="ECO:0000255" key="1">
    <source>
        <dbReference type="HAMAP-Rule" id="MF_00735"/>
    </source>
</evidence>
<gene>
    <name evidence="1" type="primary">prmA</name>
    <name type="ordered locus">Sbal223_3886</name>
</gene>
<feature type="chain" id="PRO_1000148138" description="Ribosomal protein L11 methyltransferase">
    <location>
        <begin position="1"/>
        <end position="293"/>
    </location>
</feature>
<feature type="binding site" evidence="1">
    <location>
        <position position="145"/>
    </location>
    <ligand>
        <name>S-adenosyl-L-methionine</name>
        <dbReference type="ChEBI" id="CHEBI:59789"/>
    </ligand>
</feature>
<feature type="binding site" evidence="1">
    <location>
        <position position="166"/>
    </location>
    <ligand>
        <name>S-adenosyl-L-methionine</name>
        <dbReference type="ChEBI" id="CHEBI:59789"/>
    </ligand>
</feature>
<feature type="binding site" evidence="1">
    <location>
        <position position="188"/>
    </location>
    <ligand>
        <name>S-adenosyl-L-methionine</name>
        <dbReference type="ChEBI" id="CHEBI:59789"/>
    </ligand>
</feature>
<feature type="binding site" evidence="1">
    <location>
        <position position="230"/>
    </location>
    <ligand>
        <name>S-adenosyl-L-methionine</name>
        <dbReference type="ChEBI" id="CHEBI:59789"/>
    </ligand>
</feature>
<proteinExistence type="inferred from homology"/>
<accession>B8E680</accession>